<feature type="chain" id="PRO_0000022039" description="Peroxisomal membrane protein PEX13">
    <location>
        <begin position="1"/>
        <end position="380"/>
    </location>
</feature>
<feature type="topological domain" description="Lumenal" evidence="2">
    <location>
        <begin position="1"/>
        <end position="230"/>
    </location>
</feature>
<feature type="transmembrane region" description="Helical" evidence="2">
    <location>
        <begin position="231"/>
        <end position="251"/>
    </location>
</feature>
<feature type="topological domain" description="Cytoplasmic" evidence="2">
    <location>
        <begin position="252"/>
        <end position="380"/>
    </location>
</feature>
<feature type="domain" description="SH3" evidence="3">
    <location>
        <begin position="277"/>
        <end position="344"/>
    </location>
</feature>
<feature type="region of interest" description="Disordered" evidence="4">
    <location>
        <begin position="1"/>
        <end position="30"/>
    </location>
</feature>
<feature type="compositionally biased region" description="Polar residues" evidence="4">
    <location>
        <begin position="12"/>
        <end position="30"/>
    </location>
</feature>
<feature type="splice variant" id="VSP_018788" description="In isoform PEX13S." evidence="7">
    <location>
        <begin position="1"/>
        <end position="32"/>
    </location>
</feature>
<feature type="mutagenesis site" description="No effect on activity." evidence="5">
    <original>Y</original>
    <variation>A</variation>
    <location>
        <position position="286"/>
    </location>
</feature>
<feature type="mutagenesis site" description="No effect on activity." evidence="5">
    <original>D</original>
    <variation>A</variation>
    <location>
        <position position="287"/>
    </location>
</feature>
<feature type="mutagenesis site" description="No effect on activity." evidence="5">
    <original>F</original>
    <variation>A</variation>
    <location>
        <position position="288"/>
    </location>
</feature>
<feature type="mutagenesis site" description="Abolishes activity." evidence="5">
    <original>E</original>
    <variation>K</variation>
    <location>
        <position position="291"/>
    </location>
</feature>
<feature type="mutagenesis site" description="Abolishes activity." evidence="5">
    <original>E</original>
    <variation>K</variation>
    <location>
        <position position="296"/>
    </location>
</feature>
<sequence>MSDSSAPDLPSKPSSLNAGQSSSLQTTNTGIGMGSGMGSGMGMGTYGNSYGSSYGGGYGSSMYGSGGYGMGGYGSSMYGGSRYGMGSYGMGGYGMGGYGMGMNTGMNGMGMAGSLAQGSEATFQLIESIIGAVGGFAQVLEATYMATHSSFFTMISMADQLSHLKTALGSMLGIYTVINWLKRIMGKLMGVKNKLTPDEFRKFQEKQMKKLSNSNNTGGPNKNTNKLSLKPLLLFLAAVVGFPYLLKKLIAHLAETSQMNGNFITSGGSLQGNLDPTKLEFARALYDFNPENEEMELKLARGELMAILSKTEPNSNQESTWWKCRSRDGKVGFVPYNYVEIIERHQRPVPEAQEEPAAAVLAERQQQPIIDSTEFQKMKT</sequence>
<organism>
    <name type="scientific">Komagataella pastoris</name>
    <name type="common">Yeast</name>
    <name type="synonym">Pichia pastoris</name>
    <dbReference type="NCBI Taxonomy" id="4922"/>
    <lineage>
        <taxon>Eukaryota</taxon>
        <taxon>Fungi</taxon>
        <taxon>Dikarya</taxon>
        <taxon>Ascomycota</taxon>
        <taxon>Saccharomycotina</taxon>
        <taxon>Pichiomycetes</taxon>
        <taxon>Pichiales</taxon>
        <taxon>Pichiaceae</taxon>
        <taxon>Komagataella</taxon>
    </lineage>
</organism>
<comment type="function">
    <text evidence="1 5">Component of the PEX13-PEX14 docking complex, a translocon channel that specifically mediates the import of peroxisomal cargo proteins bound to PEX5 receptor (PubMed:8858165). The PEX13-PEX14 docking complex forms a large import pore which can be opened to a diameter of about 9 nm (By similarity). Mechanistically, PEX5 receptor along with cargo proteins associates with the PEX14 subunit of the PEX13-PEX14 docking complex in the cytosol, leading to the insertion of the receptor into the organelle membrane with the concomitant translocation of the cargo into the peroxisome matrix (By similarity).</text>
</comment>
<comment type="subunit">
    <text evidence="1">Interacts (via SH3 domain) with PEX14 (via SH3-binding motif); forming the PEX13-PEX14 docking complex.</text>
</comment>
<comment type="subcellular location">
    <subcellularLocation>
        <location evidence="1">Peroxisome membrane</location>
        <topology evidence="1">Single-pass membrane protein</topology>
    </subcellularLocation>
</comment>
<comment type="alternative products">
    <event type="alternative initiation"/>
    <isoform>
        <id>Q92266-1</id>
        <name evidence="6">PEX13L</name>
        <sequence type="displayed"/>
    </isoform>
    <isoform>
        <id>Q92266-2</id>
        <name evidence="6">PEX13S</name>
        <sequence type="described" ref="VSP_018788"/>
    </isoform>
</comment>
<comment type="similarity">
    <text evidence="7">Belongs to the peroxin-13 family.</text>
</comment>
<proteinExistence type="evidence at protein level"/>
<name>PEX13_PICPA</name>
<evidence type="ECO:0000250" key="1">
    <source>
        <dbReference type="UniProtKB" id="P80667"/>
    </source>
</evidence>
<evidence type="ECO:0000255" key="2"/>
<evidence type="ECO:0000255" key="3">
    <source>
        <dbReference type="PROSITE-ProRule" id="PRU00192"/>
    </source>
</evidence>
<evidence type="ECO:0000256" key="4">
    <source>
        <dbReference type="SAM" id="MobiDB-lite"/>
    </source>
</evidence>
<evidence type="ECO:0000269" key="5">
    <source>
    </source>
</evidence>
<evidence type="ECO:0000303" key="6">
    <source>
    </source>
</evidence>
<evidence type="ECO:0000305" key="7"/>
<accession>Q92266</accession>
<keyword id="KW-0024">Alternative initiation</keyword>
<keyword id="KW-0472">Membrane</keyword>
<keyword id="KW-0576">Peroxisome</keyword>
<keyword id="KW-0653">Protein transport</keyword>
<keyword id="KW-0728">SH3 domain</keyword>
<keyword id="KW-0811">Translocation</keyword>
<keyword id="KW-0812">Transmembrane</keyword>
<keyword id="KW-1133">Transmembrane helix</keyword>
<keyword id="KW-0813">Transport</keyword>
<reference key="1">
    <citation type="journal article" date="1996" name="J. Cell Biol.">
        <title>Pex13p is an SH3 protein of the peroxisome membrane and a docking factor for the predominantly cytoplasmic PTs1 receptor.</title>
        <authorList>
            <person name="Gould S.J."/>
            <person name="Kalish J.E."/>
            <person name="Morrell J.C."/>
            <person name="Bjoerkman J."/>
            <person name="Urquhart A.J."/>
            <person name="Crane D.I."/>
        </authorList>
    </citation>
    <scope>NUCLEOTIDE SEQUENCE [GENOMIC DNA]</scope>
    <scope>ALTERNATIVE SPLICING (ISOFORMS PEX13L AND PEX13S)</scope>
    <scope>FUNCTION</scope>
    <scope>MUTAGENESIS OF TYR-286; ASP-287; PHE-288; GLU-291 AND GLU-296</scope>
</reference>
<protein>
    <recommendedName>
        <fullName>Peroxisomal membrane protein PEX13</fullName>
    </recommendedName>
    <alternativeName>
        <fullName>Peroxin-13</fullName>
    </alternativeName>
</protein>
<gene>
    <name type="primary">PEX13</name>
</gene>
<dbReference type="EMBL" id="U70067">
    <property type="protein sequence ID" value="AAB09087.1"/>
    <property type="molecule type" value="Genomic_DNA"/>
</dbReference>
<dbReference type="SMR" id="Q92266"/>
<dbReference type="GO" id="GO:1990429">
    <property type="term" value="C:peroxisomal importomer complex"/>
    <property type="evidence" value="ECO:0007669"/>
    <property type="project" value="TreeGrafter"/>
</dbReference>
<dbReference type="GO" id="GO:0005778">
    <property type="term" value="C:peroxisomal membrane"/>
    <property type="evidence" value="ECO:0007669"/>
    <property type="project" value="UniProtKB-SubCell"/>
</dbReference>
<dbReference type="GO" id="GO:0016560">
    <property type="term" value="P:protein import into peroxisome matrix, docking"/>
    <property type="evidence" value="ECO:0007669"/>
    <property type="project" value="InterPro"/>
</dbReference>
<dbReference type="CDD" id="cd11771">
    <property type="entry name" value="SH3_Pex13p_fungal"/>
    <property type="match status" value="1"/>
</dbReference>
<dbReference type="FunFam" id="2.30.30.40:FF:000128">
    <property type="entry name" value="Peroxisomal membrane protein (Pex13)"/>
    <property type="match status" value="1"/>
</dbReference>
<dbReference type="Gene3D" id="2.30.30.40">
    <property type="entry name" value="SH3 Domains"/>
    <property type="match status" value="1"/>
</dbReference>
<dbReference type="InterPro" id="IPR007223">
    <property type="entry name" value="Peroxin-13_N"/>
</dbReference>
<dbReference type="InterPro" id="IPR035463">
    <property type="entry name" value="Pex13"/>
</dbReference>
<dbReference type="InterPro" id="IPR036028">
    <property type="entry name" value="SH3-like_dom_sf"/>
</dbReference>
<dbReference type="InterPro" id="IPR001452">
    <property type="entry name" value="SH3_domain"/>
</dbReference>
<dbReference type="PANTHER" id="PTHR19332">
    <property type="entry name" value="PEROXISOMAL MEMBRANE PROTEIN PEX13"/>
    <property type="match status" value="1"/>
</dbReference>
<dbReference type="PANTHER" id="PTHR19332:SF1">
    <property type="entry name" value="PEROXISOMAL MEMBRANE PROTEIN PEX13"/>
    <property type="match status" value="1"/>
</dbReference>
<dbReference type="Pfam" id="PF04088">
    <property type="entry name" value="Peroxin-13_N"/>
    <property type="match status" value="1"/>
</dbReference>
<dbReference type="Pfam" id="PF00018">
    <property type="entry name" value="SH3_1"/>
    <property type="match status" value="1"/>
</dbReference>
<dbReference type="PRINTS" id="PR00452">
    <property type="entry name" value="SH3DOMAIN"/>
</dbReference>
<dbReference type="SMART" id="SM00326">
    <property type="entry name" value="SH3"/>
    <property type="match status" value="1"/>
</dbReference>
<dbReference type="SUPFAM" id="SSF50044">
    <property type="entry name" value="SH3-domain"/>
    <property type="match status" value="1"/>
</dbReference>
<dbReference type="PROSITE" id="PS50002">
    <property type="entry name" value="SH3"/>
    <property type="match status" value="1"/>
</dbReference>